<accession>Q035Y0</accession>
<evidence type="ECO:0000255" key="1">
    <source>
        <dbReference type="HAMAP-Rule" id="MF_01445"/>
    </source>
</evidence>
<feature type="chain" id="PRO_0000303391" description="tRNA N6-adenosine threonylcarbamoyltransferase">
    <location>
        <begin position="1"/>
        <end position="341"/>
    </location>
</feature>
<feature type="binding site" evidence="1">
    <location>
        <position position="115"/>
    </location>
    <ligand>
        <name>Fe cation</name>
        <dbReference type="ChEBI" id="CHEBI:24875"/>
    </ligand>
</feature>
<feature type="binding site" evidence="1">
    <location>
        <position position="119"/>
    </location>
    <ligand>
        <name>Fe cation</name>
        <dbReference type="ChEBI" id="CHEBI:24875"/>
    </ligand>
</feature>
<feature type="binding site" evidence="1">
    <location>
        <begin position="137"/>
        <end position="141"/>
    </location>
    <ligand>
        <name>substrate</name>
    </ligand>
</feature>
<feature type="binding site" evidence="1">
    <location>
        <position position="170"/>
    </location>
    <ligand>
        <name>substrate</name>
    </ligand>
</feature>
<feature type="binding site" evidence="1">
    <location>
        <position position="183"/>
    </location>
    <ligand>
        <name>substrate</name>
    </ligand>
</feature>
<feature type="binding site" evidence="1">
    <location>
        <position position="187"/>
    </location>
    <ligand>
        <name>substrate</name>
    </ligand>
</feature>
<feature type="binding site" evidence="1">
    <location>
        <position position="276"/>
    </location>
    <ligand>
        <name>substrate</name>
    </ligand>
</feature>
<feature type="binding site" evidence="1">
    <location>
        <position position="306"/>
    </location>
    <ligand>
        <name>Fe cation</name>
        <dbReference type="ChEBI" id="CHEBI:24875"/>
    </ligand>
</feature>
<proteinExistence type="inferred from homology"/>
<gene>
    <name evidence="1" type="primary">tsaD</name>
    <name type="synonym">gcp</name>
    <name type="ordered locus">LSEI_2248</name>
</gene>
<dbReference type="EC" id="2.3.1.234" evidence="1"/>
<dbReference type="EMBL" id="CP000423">
    <property type="protein sequence ID" value="ABJ70992.1"/>
    <property type="molecule type" value="Genomic_DNA"/>
</dbReference>
<dbReference type="RefSeq" id="WP_003567073.1">
    <property type="nucleotide sequence ID" value="NC_008526.1"/>
</dbReference>
<dbReference type="RefSeq" id="YP_807434.1">
    <property type="nucleotide sequence ID" value="NC_008526.1"/>
</dbReference>
<dbReference type="SMR" id="Q035Y0"/>
<dbReference type="STRING" id="321967.LSEI_2248"/>
<dbReference type="PaxDb" id="321967-LSEI_2248"/>
<dbReference type="KEGG" id="lca:LSEI_2248"/>
<dbReference type="PATRIC" id="fig|321967.11.peg.2211"/>
<dbReference type="HOGENOM" id="CLU_023208_0_2_9"/>
<dbReference type="Proteomes" id="UP000001651">
    <property type="component" value="Chromosome"/>
</dbReference>
<dbReference type="GO" id="GO:0005737">
    <property type="term" value="C:cytoplasm"/>
    <property type="evidence" value="ECO:0007669"/>
    <property type="project" value="UniProtKB-SubCell"/>
</dbReference>
<dbReference type="GO" id="GO:0005506">
    <property type="term" value="F:iron ion binding"/>
    <property type="evidence" value="ECO:0007669"/>
    <property type="project" value="UniProtKB-UniRule"/>
</dbReference>
<dbReference type="GO" id="GO:0061711">
    <property type="term" value="F:N(6)-L-threonylcarbamoyladenine synthase activity"/>
    <property type="evidence" value="ECO:0007669"/>
    <property type="project" value="UniProtKB-EC"/>
</dbReference>
<dbReference type="GO" id="GO:0002949">
    <property type="term" value="P:tRNA threonylcarbamoyladenosine modification"/>
    <property type="evidence" value="ECO:0007669"/>
    <property type="project" value="UniProtKB-UniRule"/>
</dbReference>
<dbReference type="CDD" id="cd24133">
    <property type="entry name" value="ASKHA_NBD_TsaD_bac"/>
    <property type="match status" value="1"/>
</dbReference>
<dbReference type="FunFam" id="3.30.420.40:FF:000012">
    <property type="entry name" value="tRNA N6-adenosine threonylcarbamoyltransferase"/>
    <property type="match status" value="1"/>
</dbReference>
<dbReference type="FunFam" id="3.30.420.40:FF:000040">
    <property type="entry name" value="tRNA N6-adenosine threonylcarbamoyltransferase"/>
    <property type="match status" value="1"/>
</dbReference>
<dbReference type="Gene3D" id="3.30.420.40">
    <property type="match status" value="2"/>
</dbReference>
<dbReference type="HAMAP" id="MF_01445">
    <property type="entry name" value="TsaD"/>
    <property type="match status" value="1"/>
</dbReference>
<dbReference type="InterPro" id="IPR043129">
    <property type="entry name" value="ATPase_NBD"/>
</dbReference>
<dbReference type="InterPro" id="IPR000905">
    <property type="entry name" value="Gcp-like_dom"/>
</dbReference>
<dbReference type="InterPro" id="IPR017861">
    <property type="entry name" value="KAE1/TsaD"/>
</dbReference>
<dbReference type="InterPro" id="IPR017860">
    <property type="entry name" value="Peptidase_M22_CS"/>
</dbReference>
<dbReference type="InterPro" id="IPR022450">
    <property type="entry name" value="TsaD"/>
</dbReference>
<dbReference type="NCBIfam" id="TIGR00329">
    <property type="entry name" value="gcp_kae1"/>
    <property type="match status" value="1"/>
</dbReference>
<dbReference type="NCBIfam" id="TIGR03723">
    <property type="entry name" value="T6A_TsaD_YgjD"/>
    <property type="match status" value="1"/>
</dbReference>
<dbReference type="PANTHER" id="PTHR11735">
    <property type="entry name" value="TRNA N6-ADENOSINE THREONYLCARBAMOYLTRANSFERASE"/>
    <property type="match status" value="1"/>
</dbReference>
<dbReference type="PANTHER" id="PTHR11735:SF6">
    <property type="entry name" value="TRNA N6-ADENOSINE THREONYLCARBAMOYLTRANSFERASE, MITOCHONDRIAL"/>
    <property type="match status" value="1"/>
</dbReference>
<dbReference type="Pfam" id="PF00814">
    <property type="entry name" value="TsaD"/>
    <property type="match status" value="1"/>
</dbReference>
<dbReference type="PRINTS" id="PR00789">
    <property type="entry name" value="OSIALOPTASE"/>
</dbReference>
<dbReference type="SUPFAM" id="SSF53067">
    <property type="entry name" value="Actin-like ATPase domain"/>
    <property type="match status" value="2"/>
</dbReference>
<dbReference type="PROSITE" id="PS01016">
    <property type="entry name" value="GLYCOPROTEASE"/>
    <property type="match status" value="1"/>
</dbReference>
<protein>
    <recommendedName>
        <fullName evidence="1">tRNA N6-adenosine threonylcarbamoyltransferase</fullName>
        <ecNumber evidence="1">2.3.1.234</ecNumber>
    </recommendedName>
    <alternativeName>
        <fullName evidence="1">N6-L-threonylcarbamoyladenine synthase</fullName>
        <shortName evidence="1">t(6)A synthase</shortName>
    </alternativeName>
    <alternativeName>
        <fullName evidence="1">t(6)A37 threonylcarbamoyladenosine biosynthesis protein TsaD</fullName>
    </alternativeName>
    <alternativeName>
        <fullName evidence="1">tRNA threonylcarbamoyladenosine biosynthesis protein TsaD</fullName>
    </alternativeName>
</protein>
<sequence length="341" mass="36321">MAARELILAFESSCDETSVAVVENGDTILSNIIATQIKSHQRFGGVVPEVASRHHVEQITLVTDAALKEAGVTYDDLTAVAVTYGPGLVGALLIGVTAAKTIAYAHHLPLIPVNHMAGHIYAARFVKPLAYPLLALAVSGGHTELVYMRSAGEFEIIGDTRDDAAGEAYDKVGRILGIPYPAGKEVDRLAHLGQDTFHFPRAMDKEDNLDFSFSGLKSAVINTVHHAHQLGQELSREDLAASFQAAVVDVLVHKTQKALHQYPVKQLIVAGGVAANQGLKEAMNETLAVNFPDVDVIVPPLRLTGDNGAMIGAAAHIEWAKQHLASESLNADPGLSFTHAS</sequence>
<name>TSAD_LACP3</name>
<organism>
    <name type="scientific">Lacticaseibacillus paracasei (strain ATCC 334 / BCRC 17002 / CCUG 31169 / CIP 107868 / KCTC 3260 / NRRL B-441)</name>
    <name type="common">Lactobacillus paracasei</name>
    <dbReference type="NCBI Taxonomy" id="321967"/>
    <lineage>
        <taxon>Bacteria</taxon>
        <taxon>Bacillati</taxon>
        <taxon>Bacillota</taxon>
        <taxon>Bacilli</taxon>
        <taxon>Lactobacillales</taxon>
        <taxon>Lactobacillaceae</taxon>
        <taxon>Lacticaseibacillus</taxon>
    </lineage>
</organism>
<keyword id="KW-0012">Acyltransferase</keyword>
<keyword id="KW-0963">Cytoplasm</keyword>
<keyword id="KW-0408">Iron</keyword>
<keyword id="KW-0479">Metal-binding</keyword>
<keyword id="KW-1185">Reference proteome</keyword>
<keyword id="KW-0808">Transferase</keyword>
<keyword id="KW-0819">tRNA processing</keyword>
<reference key="1">
    <citation type="journal article" date="2006" name="Proc. Natl. Acad. Sci. U.S.A.">
        <title>Comparative genomics of the lactic acid bacteria.</title>
        <authorList>
            <person name="Makarova K.S."/>
            <person name="Slesarev A."/>
            <person name="Wolf Y.I."/>
            <person name="Sorokin A."/>
            <person name="Mirkin B."/>
            <person name="Koonin E.V."/>
            <person name="Pavlov A."/>
            <person name="Pavlova N."/>
            <person name="Karamychev V."/>
            <person name="Polouchine N."/>
            <person name="Shakhova V."/>
            <person name="Grigoriev I."/>
            <person name="Lou Y."/>
            <person name="Rohksar D."/>
            <person name="Lucas S."/>
            <person name="Huang K."/>
            <person name="Goodstein D.M."/>
            <person name="Hawkins T."/>
            <person name="Plengvidhya V."/>
            <person name="Welker D."/>
            <person name="Hughes J."/>
            <person name="Goh Y."/>
            <person name="Benson A."/>
            <person name="Baldwin K."/>
            <person name="Lee J.-H."/>
            <person name="Diaz-Muniz I."/>
            <person name="Dosti B."/>
            <person name="Smeianov V."/>
            <person name="Wechter W."/>
            <person name="Barabote R."/>
            <person name="Lorca G."/>
            <person name="Altermann E."/>
            <person name="Barrangou R."/>
            <person name="Ganesan B."/>
            <person name="Xie Y."/>
            <person name="Rawsthorne H."/>
            <person name="Tamir D."/>
            <person name="Parker C."/>
            <person name="Breidt F."/>
            <person name="Broadbent J.R."/>
            <person name="Hutkins R."/>
            <person name="O'Sullivan D."/>
            <person name="Steele J."/>
            <person name="Unlu G."/>
            <person name="Saier M.H. Jr."/>
            <person name="Klaenhammer T."/>
            <person name="Richardson P."/>
            <person name="Kozyavkin S."/>
            <person name="Weimer B.C."/>
            <person name="Mills D.A."/>
        </authorList>
    </citation>
    <scope>NUCLEOTIDE SEQUENCE [LARGE SCALE GENOMIC DNA]</scope>
    <source>
        <strain>ATCC 334 / BCRC 17002 / CCUG 31169 / CIP 107868 / KCTC 3260 / NRRL B-441</strain>
    </source>
</reference>
<comment type="function">
    <text evidence="1">Required for the formation of a threonylcarbamoyl group on adenosine at position 37 (t(6)A37) in tRNAs that read codons beginning with adenine. Is involved in the transfer of the threonylcarbamoyl moiety of threonylcarbamoyl-AMP (TC-AMP) to the N6 group of A37, together with TsaE and TsaB. TsaD likely plays a direct catalytic role in this reaction.</text>
</comment>
<comment type="catalytic activity">
    <reaction evidence="1">
        <text>L-threonylcarbamoyladenylate + adenosine(37) in tRNA = N(6)-L-threonylcarbamoyladenosine(37) in tRNA + AMP + H(+)</text>
        <dbReference type="Rhea" id="RHEA:37059"/>
        <dbReference type="Rhea" id="RHEA-COMP:10162"/>
        <dbReference type="Rhea" id="RHEA-COMP:10163"/>
        <dbReference type="ChEBI" id="CHEBI:15378"/>
        <dbReference type="ChEBI" id="CHEBI:73682"/>
        <dbReference type="ChEBI" id="CHEBI:74411"/>
        <dbReference type="ChEBI" id="CHEBI:74418"/>
        <dbReference type="ChEBI" id="CHEBI:456215"/>
        <dbReference type="EC" id="2.3.1.234"/>
    </reaction>
</comment>
<comment type="cofactor">
    <cofactor evidence="1">
        <name>Fe(2+)</name>
        <dbReference type="ChEBI" id="CHEBI:29033"/>
    </cofactor>
    <text evidence="1">Binds 1 Fe(2+) ion per subunit.</text>
</comment>
<comment type="subcellular location">
    <subcellularLocation>
        <location evidence="1">Cytoplasm</location>
    </subcellularLocation>
</comment>
<comment type="similarity">
    <text evidence="1">Belongs to the KAE1 / TsaD family.</text>
</comment>